<protein>
    <recommendedName>
        <fullName evidence="12">Aspartate-semialdehyde dehydrogenase</fullName>
        <ecNumber evidence="5 8 9 10">1.2.1.11</ecNumber>
    </recommendedName>
    <alternativeName>
        <fullName evidence="11">CaASADH</fullName>
    </alternativeName>
</protein>
<sequence>MSVKKAGVLGATGSVGQRFILLLSKHPEFEIHALGASSRSAGKKYKDAASWKQTETLPETEQDIVVQECKPEGNFLECDVVFSGLDADVAGDIEKSFVEAGLAVVSNAKNYRREKDVPLVVPIVNPEHIDVVENKVKQAVSKGGKKPGFIICISNCSTAGLVAPLKPLVEKFGPIDALTTTTLQAISGAGFSPGVSGMDILDNIVPYISGEEDKLEWETKKILGGVNAEGTEFVPIPESEMKVSAQCNRVPVIDGHTECISLRFANRPAPSVEDVKQCLREYECAASKLGCHSAPKQTIHVLDQPDRPQPRLDRDRDSGYGVSVGRIREDSLLDFKMVVLSHNTIIGAAGAGILIAEILKAKNII</sequence>
<proteinExistence type="evidence at protein level"/>
<feature type="chain" id="PRO_0000461593" description="Aspartate-semialdehyde dehydrogenase">
    <location>
        <begin position="1"/>
        <end position="365"/>
    </location>
</feature>
<feature type="active site" description="Acyl-thioester intermediate" evidence="4">
    <location>
        <position position="156"/>
    </location>
</feature>
<feature type="active site" description="Proton acceptor" evidence="4">
    <location>
        <position position="256"/>
    </location>
</feature>
<feature type="binding site" evidence="6 16">
    <location>
        <position position="12"/>
    </location>
    <ligand>
        <name>NADP(+)</name>
        <dbReference type="ChEBI" id="CHEBI:58349"/>
    </ligand>
</feature>
<feature type="binding site" evidence="6 16">
    <location>
        <position position="13"/>
    </location>
    <ligand>
        <name>NADP(+)</name>
        <dbReference type="ChEBI" id="CHEBI:58349"/>
    </ligand>
</feature>
<feature type="binding site" evidence="6 16">
    <location>
        <position position="14"/>
    </location>
    <ligand>
        <name>NADP(+)</name>
        <dbReference type="ChEBI" id="CHEBI:58349"/>
    </ligand>
</feature>
<feature type="binding site" evidence="2">
    <location>
        <position position="15"/>
    </location>
    <ligand>
        <name>NADP(+)</name>
        <dbReference type="ChEBI" id="CHEBI:58349"/>
    </ligand>
</feature>
<feature type="binding site" evidence="6 16">
    <location>
        <position position="37"/>
    </location>
    <ligand>
        <name>NADP(+)</name>
        <dbReference type="ChEBI" id="CHEBI:58349"/>
    </ligand>
</feature>
<feature type="binding site" evidence="6 16">
    <location>
        <position position="40"/>
    </location>
    <ligand>
        <name>NADP(+)</name>
        <dbReference type="ChEBI" id="CHEBI:58349"/>
    </ligand>
</feature>
<feature type="binding site" evidence="1">
    <location>
        <position position="85"/>
    </location>
    <ligand>
        <name>NADP(+)</name>
        <dbReference type="ChEBI" id="CHEBI:58349"/>
    </ligand>
</feature>
<feature type="binding site" evidence="1">
    <location>
        <position position="86"/>
    </location>
    <ligand>
        <name>NADP(+)</name>
        <dbReference type="ChEBI" id="CHEBI:58349"/>
    </ligand>
</feature>
<feature type="binding site" evidence="1">
    <location>
        <position position="188"/>
    </location>
    <ligand>
        <name>NADP(+)</name>
        <dbReference type="ChEBI" id="CHEBI:58349"/>
    </ligand>
</feature>
<feature type="binding site" evidence="2">
    <location>
        <position position="343"/>
    </location>
    <ligand>
        <name>NADP(+)</name>
        <dbReference type="ChEBI" id="CHEBI:58349"/>
    </ligand>
</feature>
<feature type="strand" evidence="17">
    <location>
        <begin position="4"/>
        <end position="9"/>
    </location>
</feature>
<feature type="turn" evidence="17">
    <location>
        <begin position="10"/>
        <end position="12"/>
    </location>
</feature>
<feature type="helix" evidence="17">
    <location>
        <begin position="14"/>
        <end position="23"/>
    </location>
</feature>
<feature type="strand" evidence="17">
    <location>
        <begin position="27"/>
        <end position="36"/>
    </location>
</feature>
<feature type="turn" evidence="17">
    <location>
        <begin position="38"/>
        <end position="42"/>
    </location>
</feature>
<feature type="helix" evidence="17">
    <location>
        <begin position="45"/>
        <end position="48"/>
    </location>
</feature>
<feature type="helix" evidence="17">
    <location>
        <begin position="59"/>
        <end position="62"/>
    </location>
</feature>
<feature type="strand" evidence="17">
    <location>
        <begin position="67"/>
        <end position="71"/>
    </location>
</feature>
<feature type="helix" evidence="17">
    <location>
        <begin position="75"/>
        <end position="77"/>
    </location>
</feature>
<feature type="strand" evidence="17">
    <location>
        <begin position="79"/>
        <end position="83"/>
    </location>
</feature>
<feature type="helix" evidence="17">
    <location>
        <begin position="87"/>
        <end position="99"/>
    </location>
</feature>
<feature type="strand" evidence="17">
    <location>
        <begin position="103"/>
        <end position="106"/>
    </location>
</feature>
<feature type="turn" evidence="17">
    <location>
        <begin position="110"/>
        <end position="113"/>
    </location>
</feature>
<feature type="turn" evidence="17">
    <location>
        <begin position="122"/>
        <end position="124"/>
    </location>
</feature>
<feature type="helix" evidence="17">
    <location>
        <begin position="126"/>
        <end position="129"/>
    </location>
</feature>
<feature type="helix" evidence="17">
    <location>
        <begin position="130"/>
        <end position="141"/>
    </location>
</feature>
<feature type="strand" evidence="17">
    <location>
        <begin position="149"/>
        <end position="153"/>
    </location>
</feature>
<feature type="helix" evidence="17">
    <location>
        <begin position="156"/>
        <end position="172"/>
    </location>
</feature>
<feature type="strand" evidence="17">
    <location>
        <begin position="175"/>
        <end position="184"/>
    </location>
</feature>
<feature type="helix" evidence="17">
    <location>
        <begin position="197"/>
        <end position="200"/>
    </location>
</feature>
<feature type="helix" evidence="17">
    <location>
        <begin position="211"/>
        <end position="222"/>
    </location>
</feature>
<feature type="strand" evidence="17">
    <location>
        <begin position="230"/>
        <end position="234"/>
    </location>
</feature>
<feature type="turn" evidence="17">
    <location>
        <begin position="238"/>
        <end position="240"/>
    </location>
</feature>
<feature type="strand" evidence="17">
    <location>
        <begin position="242"/>
        <end position="246"/>
    </location>
</feature>
<feature type="strand" evidence="17">
    <location>
        <begin position="257"/>
        <end position="268"/>
    </location>
</feature>
<feature type="helix" evidence="17">
    <location>
        <begin position="272"/>
        <end position="281"/>
    </location>
</feature>
<feature type="helix" evidence="17">
    <location>
        <begin position="285"/>
        <end position="288"/>
    </location>
</feature>
<feature type="strand" evidence="17">
    <location>
        <begin position="296"/>
        <end position="302"/>
    </location>
</feature>
<feature type="helix" evidence="17">
    <location>
        <begin position="310"/>
        <end position="313"/>
    </location>
</feature>
<feature type="turn" evidence="17">
    <location>
        <begin position="314"/>
        <end position="319"/>
    </location>
</feature>
<feature type="strand" evidence="17">
    <location>
        <begin position="320"/>
        <end position="329"/>
    </location>
</feature>
<feature type="strand" evidence="17">
    <location>
        <begin position="331"/>
        <end position="341"/>
    </location>
</feature>
<feature type="helix" evidence="17">
    <location>
        <begin position="343"/>
        <end position="346"/>
    </location>
</feature>
<feature type="helix" evidence="17">
    <location>
        <begin position="348"/>
        <end position="360"/>
    </location>
</feature>
<feature type="turn" evidence="17">
    <location>
        <begin position="361"/>
        <end position="363"/>
    </location>
</feature>
<accession>Q5ALM0</accession>
<organism evidence="15">
    <name type="scientific">Candida albicans (strain SC5314 / ATCC MYA-2876)</name>
    <name type="common">Yeast</name>
    <dbReference type="NCBI Taxonomy" id="237561"/>
    <lineage>
        <taxon>Eukaryota</taxon>
        <taxon>Fungi</taxon>
        <taxon>Dikarya</taxon>
        <taxon>Ascomycota</taxon>
        <taxon>Saccharomycotina</taxon>
        <taxon>Pichiomycetes</taxon>
        <taxon>Debaryomycetaceae</taxon>
        <taxon>Candida/Lodderomyces clade</taxon>
        <taxon>Candida</taxon>
    </lineage>
</organism>
<keyword id="KW-0002">3D-structure</keyword>
<keyword id="KW-0028">Amino-acid biosynthesis</keyword>
<keyword id="KW-0963">Cytoplasm</keyword>
<keyword id="KW-0486">Methionine biosynthesis</keyword>
<keyword id="KW-0521">NADP</keyword>
<keyword id="KW-0547">Nucleotide-binding</keyword>
<keyword id="KW-0539">Nucleus</keyword>
<keyword id="KW-0560">Oxidoreductase</keyword>
<keyword id="KW-1185">Reference proteome</keyword>
<keyword id="KW-0791">Threonine biosynthesis</keyword>
<dbReference type="EC" id="1.2.1.11" evidence="5 8 9 10"/>
<dbReference type="EMBL" id="CP017624">
    <property type="protein sequence ID" value="AOW27277.1"/>
    <property type="molecule type" value="Genomic_DNA"/>
</dbReference>
<dbReference type="RefSeq" id="XP_722601.1">
    <property type="nucleotide sequence ID" value="XM_717508.2"/>
</dbReference>
<dbReference type="PDB" id="3HSK">
    <property type="method" value="X-ray"/>
    <property type="resolution" value="2.20 A"/>
    <property type="chains" value="A/B=1-365"/>
</dbReference>
<dbReference type="PDBsum" id="3HSK"/>
<dbReference type="SMR" id="Q5ALM0"/>
<dbReference type="FunCoup" id="Q5ALM0">
    <property type="interactions" value="365"/>
</dbReference>
<dbReference type="STRING" id="237561.Q5ALM0"/>
<dbReference type="EnsemblFungi" id="C2_02370C_A-T">
    <property type="protein sequence ID" value="C2_02370C_A-T-p1"/>
    <property type="gene ID" value="C2_02370C_A"/>
</dbReference>
<dbReference type="GeneID" id="3635826"/>
<dbReference type="KEGG" id="cal:CAALFM_C202370CA"/>
<dbReference type="CGD" id="CAL0000179646">
    <property type="gene designation" value="HOM2"/>
</dbReference>
<dbReference type="VEuPathDB" id="FungiDB:C2_02370C_A"/>
<dbReference type="eggNOG" id="KOG4777">
    <property type="taxonomic scope" value="Eukaryota"/>
</dbReference>
<dbReference type="HOGENOM" id="CLU_049966_1_0_1"/>
<dbReference type="InParanoid" id="Q5ALM0"/>
<dbReference type="OMA" id="CEEEMKM"/>
<dbReference type="OrthoDB" id="1894490at2759"/>
<dbReference type="BRENDA" id="1.2.1.11">
    <property type="organism ID" value="1096"/>
</dbReference>
<dbReference type="UniPathway" id="UPA00050">
    <property type="reaction ID" value="UER00463"/>
</dbReference>
<dbReference type="UniPathway" id="UPA00051">
    <property type="reaction ID" value="UER00464"/>
</dbReference>
<dbReference type="EvolutionaryTrace" id="Q5ALM0"/>
<dbReference type="Proteomes" id="UP000000559">
    <property type="component" value="Chromosome 2"/>
</dbReference>
<dbReference type="GO" id="GO:0005829">
    <property type="term" value="C:cytosol"/>
    <property type="evidence" value="ECO:0007669"/>
    <property type="project" value="UniProtKB-SubCell"/>
</dbReference>
<dbReference type="GO" id="GO:0005634">
    <property type="term" value="C:nucleus"/>
    <property type="evidence" value="ECO:0007669"/>
    <property type="project" value="UniProtKB-SubCell"/>
</dbReference>
<dbReference type="GO" id="GO:0004073">
    <property type="term" value="F:aspartate-semialdehyde dehydrogenase activity"/>
    <property type="evidence" value="ECO:0000318"/>
    <property type="project" value="GO_Central"/>
</dbReference>
<dbReference type="GO" id="GO:0051287">
    <property type="term" value="F:NAD binding"/>
    <property type="evidence" value="ECO:0007669"/>
    <property type="project" value="InterPro"/>
</dbReference>
<dbReference type="GO" id="GO:0050661">
    <property type="term" value="F:NADP binding"/>
    <property type="evidence" value="ECO:0007669"/>
    <property type="project" value="InterPro"/>
</dbReference>
<dbReference type="GO" id="GO:0046983">
    <property type="term" value="F:protein dimerization activity"/>
    <property type="evidence" value="ECO:0007669"/>
    <property type="project" value="InterPro"/>
</dbReference>
<dbReference type="GO" id="GO:0009090">
    <property type="term" value="P:homoserine biosynthetic process"/>
    <property type="evidence" value="ECO:0007669"/>
    <property type="project" value="EnsemblFungi"/>
</dbReference>
<dbReference type="GO" id="GO:0009089">
    <property type="term" value="P:lysine biosynthetic process via diaminopimelate"/>
    <property type="evidence" value="ECO:0007669"/>
    <property type="project" value="UniProtKB-UniPathway"/>
</dbReference>
<dbReference type="GO" id="GO:0009086">
    <property type="term" value="P:methionine biosynthetic process"/>
    <property type="evidence" value="ECO:0000318"/>
    <property type="project" value="GO_Central"/>
</dbReference>
<dbReference type="GO" id="GO:0009088">
    <property type="term" value="P:threonine biosynthetic process"/>
    <property type="evidence" value="ECO:0000318"/>
    <property type="project" value="GO_Central"/>
</dbReference>
<dbReference type="CDD" id="cd18130">
    <property type="entry name" value="ASADH_C_arch_fung_like"/>
    <property type="match status" value="1"/>
</dbReference>
<dbReference type="CDD" id="cd02315">
    <property type="entry name" value="ScASADH_like_N"/>
    <property type="match status" value="1"/>
</dbReference>
<dbReference type="FunFam" id="3.40.50.720:FF:000200">
    <property type="entry name" value="Aspartate-semialdehyde dehydrogenase"/>
    <property type="match status" value="1"/>
</dbReference>
<dbReference type="FunFam" id="3.30.360.10:FF:000016">
    <property type="entry name" value="Probable aspartate-semialdehyde dehydrogenase"/>
    <property type="match status" value="1"/>
</dbReference>
<dbReference type="Gene3D" id="3.30.360.10">
    <property type="entry name" value="Dihydrodipicolinate Reductase, domain 2"/>
    <property type="match status" value="1"/>
</dbReference>
<dbReference type="Gene3D" id="3.40.50.720">
    <property type="entry name" value="NAD(P)-binding Rossmann-like Domain"/>
    <property type="match status" value="1"/>
</dbReference>
<dbReference type="InterPro" id="IPR051823">
    <property type="entry name" value="ASADH-related"/>
</dbReference>
<dbReference type="InterPro" id="IPR000319">
    <property type="entry name" value="Asp-semialdehyde_DH_CS"/>
</dbReference>
<dbReference type="InterPro" id="IPR005676">
    <property type="entry name" value="Asp_semi-ald_DH_pep-lack"/>
</dbReference>
<dbReference type="InterPro" id="IPR036291">
    <property type="entry name" value="NAD(P)-bd_dom_sf"/>
</dbReference>
<dbReference type="InterPro" id="IPR000534">
    <property type="entry name" value="Semialdehyde_DH_NAD-bd"/>
</dbReference>
<dbReference type="InterPro" id="IPR012280">
    <property type="entry name" value="Semialdhyde_DH_dimer_dom"/>
</dbReference>
<dbReference type="NCBIfam" id="TIGR00978">
    <property type="entry name" value="asd_EA"/>
    <property type="match status" value="1"/>
</dbReference>
<dbReference type="NCBIfam" id="NF006416">
    <property type="entry name" value="PRK08664.1"/>
    <property type="match status" value="1"/>
</dbReference>
<dbReference type="PANTHER" id="PTHR46718">
    <property type="entry name" value="ASPARTATE-SEMIALDEHYDE DEHYDROGENASE"/>
    <property type="match status" value="1"/>
</dbReference>
<dbReference type="PANTHER" id="PTHR46718:SF1">
    <property type="entry name" value="ASPARTATE-SEMIALDEHYDE DEHYDROGENASE"/>
    <property type="match status" value="1"/>
</dbReference>
<dbReference type="Pfam" id="PF01118">
    <property type="entry name" value="Semialdhyde_dh"/>
    <property type="match status" value="1"/>
</dbReference>
<dbReference type="Pfam" id="PF02774">
    <property type="entry name" value="Semialdhyde_dhC"/>
    <property type="match status" value="1"/>
</dbReference>
<dbReference type="PIRSF" id="PIRSF000148">
    <property type="entry name" value="ASA_dh"/>
    <property type="match status" value="1"/>
</dbReference>
<dbReference type="SMART" id="SM00859">
    <property type="entry name" value="Semialdhyde_dh"/>
    <property type="match status" value="1"/>
</dbReference>
<dbReference type="SUPFAM" id="SSF55347">
    <property type="entry name" value="Glyceraldehyde-3-phosphate dehydrogenase-like, C-terminal domain"/>
    <property type="match status" value="1"/>
</dbReference>
<dbReference type="SUPFAM" id="SSF51735">
    <property type="entry name" value="NAD(P)-binding Rossmann-fold domains"/>
    <property type="match status" value="1"/>
</dbReference>
<dbReference type="PROSITE" id="PS01103">
    <property type="entry name" value="ASD"/>
    <property type="match status" value="1"/>
</dbReference>
<gene>
    <name evidence="11" type="primary">HOM2</name>
    <name evidence="14" type="ordered locus">CAALFM_C202370CA</name>
    <name evidence="13" type="ordered locus">orf19.9132</name>
</gene>
<evidence type="ECO:0000250" key="1">
    <source>
        <dbReference type="UniProtKB" id="A0A080WMA9"/>
    </source>
</evidence>
<evidence type="ECO:0000250" key="2">
    <source>
        <dbReference type="UniProtKB" id="A0A179UL48"/>
    </source>
</evidence>
<evidence type="ECO:0000250" key="3">
    <source>
        <dbReference type="UniProtKB" id="P13663"/>
    </source>
</evidence>
<evidence type="ECO:0000255" key="4">
    <source>
        <dbReference type="PIRSR" id="PIRSR000148-1"/>
    </source>
</evidence>
<evidence type="ECO:0000269" key="5">
    <source>
    </source>
</evidence>
<evidence type="ECO:0000269" key="6">
    <source>
    </source>
</evidence>
<evidence type="ECO:0000269" key="7">
    <source>
    </source>
</evidence>
<evidence type="ECO:0000269" key="8">
    <source>
    </source>
</evidence>
<evidence type="ECO:0000269" key="9">
    <source>
    </source>
</evidence>
<evidence type="ECO:0000269" key="10">
    <source>
    </source>
</evidence>
<evidence type="ECO:0000303" key="11">
    <source>
    </source>
</evidence>
<evidence type="ECO:0000305" key="12"/>
<evidence type="ECO:0000312" key="13">
    <source>
        <dbReference type="CGD" id="CAL0000179646"/>
    </source>
</evidence>
<evidence type="ECO:0000312" key="14">
    <source>
        <dbReference type="EMBL" id="AOW27277.1"/>
    </source>
</evidence>
<evidence type="ECO:0000312" key="15">
    <source>
        <dbReference type="Proteomes" id="UP000000559"/>
    </source>
</evidence>
<evidence type="ECO:0007744" key="16">
    <source>
        <dbReference type="PDB" id="3HSK"/>
    </source>
</evidence>
<evidence type="ECO:0007829" key="17">
    <source>
        <dbReference type="PDB" id="3HSK"/>
    </source>
</evidence>
<comment type="function">
    <text evidence="5 8 9 10">Catalyzes the NADPH-dependent formation of L-aspartate 4-semialdehyde (L-ASA) by the reductive dephosphorylation of 4-phospho-L-aspartate (PubMed:20124701, PubMed:29608391, PubMed:32383780, PubMed:34469014). Mediates the second step in the biosynthesis of amino acids that derive from aspartate (the aspartate family of amino acids), including methioinine and threonine, the latter of which is a precursor to isoleucine (PubMed:20124701).</text>
</comment>
<comment type="catalytic activity">
    <reaction evidence="5 8 9 10">
        <text>L-aspartate 4-semialdehyde + phosphate + NADP(+) = 4-phospho-L-aspartate + NADPH + H(+)</text>
        <dbReference type="Rhea" id="RHEA:24284"/>
        <dbReference type="ChEBI" id="CHEBI:15378"/>
        <dbReference type="ChEBI" id="CHEBI:43474"/>
        <dbReference type="ChEBI" id="CHEBI:57535"/>
        <dbReference type="ChEBI" id="CHEBI:57783"/>
        <dbReference type="ChEBI" id="CHEBI:58349"/>
        <dbReference type="ChEBI" id="CHEBI:537519"/>
        <dbReference type="EC" id="1.2.1.11"/>
    </reaction>
    <physiologicalReaction direction="right-to-left" evidence="5 8 9 10">
        <dbReference type="Rhea" id="RHEA:24286"/>
    </physiologicalReaction>
</comment>
<comment type="activity regulation">
    <text evidence="8 9 10">Inhibited by the non-competitive inhibitors phthalaldehyde and naphthalene, the competitive inhibitor 1,4-benzoquinone and derivates such as 2-chloro-3-methoxy-1,4-naphthoquinone, 2,3-dichloro-1,4-naphthoquinone, 2-chloro-1,4-naphthoquinone, 2-bromo-1,4-naphthoquinone and 2,3-dichloro-5,8-dihydroxy-1,4-naphthoquinone, and 5-aminoisoquinoline (PubMed:29608391, PubMed:32383780, PubMed:34469014). Inhibited by vinyl sulfones (PubMed:34469014).</text>
</comment>
<comment type="biophysicochemical properties">
    <kinetics>
        <text evidence="5">kcat is 0.12 sec(-1).</text>
    </kinetics>
</comment>
<comment type="pathway">
    <text evidence="5">Amino-acid biosynthesis; L-methionine biosynthesis via de novo pathway; L-homoserine from L-aspartate: step 2/3.</text>
</comment>
<comment type="pathway">
    <text evidence="5">Amino-acid biosynthesis; L-threonine biosynthesis; L-threonine from L-aspartate: step 2/5.</text>
</comment>
<comment type="subunit">
    <text evidence="5 7">Homotetramer; dimer of dimers.</text>
</comment>
<comment type="subcellular location">
    <subcellularLocation>
        <location evidence="3">Cytoplasm</location>
        <location evidence="3">Cytosol</location>
    </subcellularLocation>
    <subcellularLocation>
        <location evidence="3">Nucleus</location>
    </subcellularLocation>
</comment>
<comment type="disruption phenotype">
    <text evidence="9">Inviable; the presence of homoserine in the medium does not rescue growth.</text>
</comment>
<comment type="similarity">
    <text evidence="12">Belongs to the aspartate-semialdehyde dehydrogenase family.</text>
</comment>
<name>DHAS_CANAL</name>
<reference evidence="15" key="1">
    <citation type="journal article" date="2004" name="Proc. Natl. Acad. Sci. U.S.A.">
        <title>The diploid genome sequence of Candida albicans.</title>
        <authorList>
            <person name="Jones T."/>
            <person name="Federspiel N.A."/>
            <person name="Chibana H."/>
            <person name="Dungan J."/>
            <person name="Kalman S."/>
            <person name="Magee B.B."/>
            <person name="Newport G."/>
            <person name="Thorstenson Y.R."/>
            <person name="Agabian N."/>
            <person name="Magee P.T."/>
            <person name="Davis R.W."/>
            <person name="Scherer S."/>
        </authorList>
    </citation>
    <scope>NUCLEOTIDE SEQUENCE [LARGE SCALE GENOMIC DNA]</scope>
    <source>
        <strain evidence="15">SC5314 / ATCC MYA-2876</strain>
    </source>
</reference>
<reference evidence="15" key="2">
    <citation type="journal article" date="2007" name="Genome Biol.">
        <title>Assembly of the Candida albicans genome into sixteen supercontigs aligned on the eight chromosomes.</title>
        <authorList>
            <person name="van het Hoog M."/>
            <person name="Rast T.J."/>
            <person name="Martchenko M."/>
            <person name="Grindle S."/>
            <person name="Dignard D."/>
            <person name="Hogues H."/>
            <person name="Cuomo C."/>
            <person name="Berriman M."/>
            <person name="Scherer S."/>
            <person name="Magee B.B."/>
            <person name="Whiteway M."/>
            <person name="Chibana H."/>
            <person name="Nantel A."/>
            <person name="Magee P.T."/>
        </authorList>
    </citation>
    <scope>GENOME REANNOTATION</scope>
    <source>
        <strain evidence="15">SC5314 / ATCC MYA-2876</strain>
    </source>
</reference>
<reference evidence="15" key="3">
    <citation type="journal article" date="2013" name="Genome Biol.">
        <title>Assembly of a phased diploid Candida albicans genome facilitates allele-specific measurements and provides a simple model for repeat and indel structure.</title>
        <authorList>
            <person name="Muzzey D."/>
            <person name="Schwartz K."/>
            <person name="Weissman J.S."/>
            <person name="Sherlock G."/>
        </authorList>
    </citation>
    <scope>NUCLEOTIDE SEQUENCE [LARGE SCALE GENOMIC DNA]</scope>
    <scope>GENOME REANNOTATION</scope>
    <source>
        <strain evidence="15">SC5314 / ATCC MYA-2876</strain>
    </source>
</reference>
<reference evidence="12" key="4">
    <citation type="journal article" date="2016" name="Sci. Rep.">
        <title>Structural Insights into the Tetrameric State of Aspartate-beta-semialdehyde Dehydrogenases from Fungal Species.</title>
        <authorList>
            <person name="Li Q."/>
            <person name="Mu Z."/>
            <person name="Zhao R."/>
            <person name="Dahal G."/>
            <person name="Viola R.E."/>
            <person name="Liu T."/>
            <person name="Jin Q."/>
            <person name="Cui S."/>
        </authorList>
    </citation>
    <scope>SUBUNIT</scope>
</reference>
<reference evidence="12" key="5">
    <citation type="journal article" date="2018" name="SLAS Discovery">
        <title>A Fragment Library Screening Approach to Identify Selective Inhibitors against an Essential Fungal Enzyme.</title>
        <authorList>
            <person name="Dahal G.P."/>
            <person name="Viola R.E."/>
        </authorList>
    </citation>
    <scope>FUNCTION</scope>
    <scope>CATALYTIC ACTIVITY</scope>
    <scope>ACTIVITY REGULATION</scope>
</reference>
<reference evidence="12" key="6">
    <citation type="journal article" date="2020" name="Drug Dev. Res.">
        <title>Aspartate semialdehyde dehydrogenase inhibition suppresses the growth of the pathogenic fungus Candida albicans.</title>
        <authorList>
            <person name="Dahal G.P."/>
            <person name="Launder D."/>
            <person name="McKeone K.M.M."/>
            <person name="Hunter J.P."/>
            <person name="Conti H.R."/>
            <person name="Viola R.E."/>
        </authorList>
    </citation>
    <scope>FUNCTION</scope>
    <scope>CATALYTIC ACTIVITY</scope>
    <scope>ACTIVITY REGULATION</scope>
    <scope>DISRUPTION PHENOTYPE</scope>
</reference>
<reference evidence="12" key="7">
    <citation type="journal article" date="2022" name="Drug Dev. Res.">
        <title>Design and testing of selective inactivators against an antifungal enzyme target.</title>
        <authorList>
            <person name="Friday S.N."/>
            <person name="Cheng D.W."/>
            <person name="Zagler S.G."/>
            <person name="Zanella B.S."/>
            <person name="Dietz J.D."/>
            <person name="Calbat C.N."/>
            <person name="Roach L.T."/>
            <person name="Bagnal C."/>
            <person name="Faile I.S."/>
            <person name="Halkides C.J."/>
            <person name="Viola R.E."/>
        </authorList>
    </citation>
    <scope>FUNCTION</scope>
    <scope>CATALYTIC ACTIVITY</scope>
    <scope>ACTIVITY REGULATION</scope>
</reference>
<reference evidence="16" key="8">
    <citation type="journal article" date="2010" name="Acta Crystallogr. D">
        <title>Expansion of the aspartate beta-semialdehyde dehydrogenase family: the first structure of a fungal ortholog.</title>
        <authorList>
            <person name="Arachea B.T."/>
            <person name="Liu X."/>
            <person name="Pavlovsky A.G."/>
            <person name="Viola R.E."/>
        </authorList>
    </citation>
    <scope>X-RAY CRYSTALLOGRAPHY (2.20 ANGSTROMS) IN COMPLEX WITH NADP(+)</scope>
    <scope>FUNCTION</scope>
    <scope>CATALYTIC ACTIVITY</scope>
    <scope>BIOPHYSICOCHEMICAL PROPERTIES</scope>
    <scope>PATHWAY</scope>
    <scope>SUBUNIT</scope>
</reference>